<comment type="catalytic activity">
    <reaction evidence="1">
        <text>L-methionyl-[protein] + [thioredoxin]-disulfide + H2O = L-methionyl-(R)-S-oxide-[protein] + [thioredoxin]-dithiol</text>
        <dbReference type="Rhea" id="RHEA:24164"/>
        <dbReference type="Rhea" id="RHEA-COMP:10698"/>
        <dbReference type="Rhea" id="RHEA-COMP:10700"/>
        <dbReference type="Rhea" id="RHEA-COMP:12313"/>
        <dbReference type="Rhea" id="RHEA-COMP:12314"/>
        <dbReference type="ChEBI" id="CHEBI:15377"/>
        <dbReference type="ChEBI" id="CHEBI:16044"/>
        <dbReference type="ChEBI" id="CHEBI:29950"/>
        <dbReference type="ChEBI" id="CHEBI:45764"/>
        <dbReference type="ChEBI" id="CHEBI:50058"/>
        <dbReference type="EC" id="1.8.4.12"/>
    </reaction>
</comment>
<comment type="cofactor">
    <cofactor evidence="1">
        <name>Zn(2+)</name>
        <dbReference type="ChEBI" id="CHEBI:29105"/>
    </cofactor>
    <text evidence="1">Binds 1 zinc ion per subunit. The zinc ion is important for the structural integrity of the protein.</text>
</comment>
<comment type="similarity">
    <text evidence="1">Belongs to the MsrB Met sulfoxide reductase family.</text>
</comment>
<organism>
    <name type="scientific">Pseudomonas aeruginosa (strain ATCC 15692 / DSM 22644 / CIP 104116 / JCM 14847 / LMG 12228 / 1C / PRS 101 / PAO1)</name>
    <dbReference type="NCBI Taxonomy" id="208964"/>
    <lineage>
        <taxon>Bacteria</taxon>
        <taxon>Pseudomonadati</taxon>
        <taxon>Pseudomonadota</taxon>
        <taxon>Gammaproteobacteria</taxon>
        <taxon>Pseudomonadales</taxon>
        <taxon>Pseudomonadaceae</taxon>
        <taxon>Pseudomonas</taxon>
    </lineage>
</organism>
<name>MSRB_PSEAE</name>
<sequence length="132" mass="14825">MSKIDKPLDSWREELTEEQFHICRLGGTERAFSGEYHATKTPGIYHCTCCGTALFDSDAKYDSGSGWPSYFQPVDAEAVRELDDFSHGMHRIEVRCGRCDAHLGHVFPDGPRPTGLRYCINSASLKLVPRES</sequence>
<reference key="1">
    <citation type="journal article" date="2000" name="Nature">
        <title>Complete genome sequence of Pseudomonas aeruginosa PAO1, an opportunistic pathogen.</title>
        <authorList>
            <person name="Stover C.K."/>
            <person name="Pham X.-Q.T."/>
            <person name="Erwin A.L."/>
            <person name="Mizoguchi S.D."/>
            <person name="Warrener P."/>
            <person name="Hickey M.J."/>
            <person name="Brinkman F.S.L."/>
            <person name="Hufnagle W.O."/>
            <person name="Kowalik D.J."/>
            <person name="Lagrou M."/>
            <person name="Garber R.L."/>
            <person name="Goltry L."/>
            <person name="Tolentino E."/>
            <person name="Westbrock-Wadman S."/>
            <person name="Yuan Y."/>
            <person name="Brody L.L."/>
            <person name="Coulter S.N."/>
            <person name="Folger K.R."/>
            <person name="Kas A."/>
            <person name="Larbig K."/>
            <person name="Lim R.M."/>
            <person name="Smith K.A."/>
            <person name="Spencer D.H."/>
            <person name="Wong G.K.-S."/>
            <person name="Wu Z."/>
            <person name="Paulsen I.T."/>
            <person name="Reizer J."/>
            <person name="Saier M.H. Jr."/>
            <person name="Hancock R.E.W."/>
            <person name="Lory S."/>
            <person name="Olson M.V."/>
        </authorList>
    </citation>
    <scope>NUCLEOTIDE SEQUENCE [LARGE SCALE GENOMIC DNA]</scope>
    <source>
        <strain>ATCC 15692 / DSM 22644 / CIP 104116 / JCM 14847 / LMG 12228 / 1C / PRS 101 / PAO1</strain>
    </source>
</reference>
<keyword id="KW-0479">Metal-binding</keyword>
<keyword id="KW-0560">Oxidoreductase</keyword>
<keyword id="KW-1185">Reference proteome</keyword>
<keyword id="KW-0862">Zinc</keyword>
<accession>Q9I016</accession>
<dbReference type="EC" id="1.8.4.12" evidence="1"/>
<dbReference type="EMBL" id="AE004091">
    <property type="protein sequence ID" value="AAG06215.1"/>
    <property type="molecule type" value="Genomic_DNA"/>
</dbReference>
<dbReference type="PIR" id="A83293">
    <property type="entry name" value="A83293"/>
</dbReference>
<dbReference type="RefSeq" id="NP_251517.1">
    <property type="nucleotide sequence ID" value="NC_002516.2"/>
</dbReference>
<dbReference type="RefSeq" id="WP_003090911.1">
    <property type="nucleotide sequence ID" value="NZ_QZGE01000011.1"/>
</dbReference>
<dbReference type="SMR" id="Q9I016"/>
<dbReference type="FunCoup" id="Q9I016">
    <property type="interactions" value="616"/>
</dbReference>
<dbReference type="STRING" id="208964.PA2827"/>
<dbReference type="PaxDb" id="208964-PA2827"/>
<dbReference type="DNASU" id="878842"/>
<dbReference type="GeneID" id="878842"/>
<dbReference type="KEGG" id="pae:PA2827"/>
<dbReference type="PATRIC" id="fig|208964.12.peg.2964"/>
<dbReference type="PseudoCAP" id="PA2827"/>
<dbReference type="HOGENOM" id="CLU_031040_8_5_6"/>
<dbReference type="InParanoid" id="Q9I016"/>
<dbReference type="OrthoDB" id="9785497at2"/>
<dbReference type="PhylomeDB" id="Q9I016"/>
<dbReference type="BioCyc" id="PAER208964:G1FZ6-2876-MONOMER"/>
<dbReference type="Proteomes" id="UP000002438">
    <property type="component" value="Chromosome"/>
</dbReference>
<dbReference type="GO" id="GO:0005737">
    <property type="term" value="C:cytoplasm"/>
    <property type="evidence" value="ECO:0000318"/>
    <property type="project" value="GO_Central"/>
</dbReference>
<dbReference type="GO" id="GO:0033743">
    <property type="term" value="F:peptide-methionine (R)-S-oxide reductase activity"/>
    <property type="evidence" value="ECO:0000318"/>
    <property type="project" value="GO_Central"/>
</dbReference>
<dbReference type="GO" id="GO:0008270">
    <property type="term" value="F:zinc ion binding"/>
    <property type="evidence" value="ECO:0007669"/>
    <property type="project" value="UniProtKB-UniRule"/>
</dbReference>
<dbReference type="GO" id="GO:0034599">
    <property type="term" value="P:cellular response to oxidative stress"/>
    <property type="evidence" value="ECO:0000315"/>
    <property type="project" value="PseudoCAP"/>
</dbReference>
<dbReference type="GO" id="GO:0030091">
    <property type="term" value="P:protein repair"/>
    <property type="evidence" value="ECO:0007669"/>
    <property type="project" value="InterPro"/>
</dbReference>
<dbReference type="GO" id="GO:1901530">
    <property type="term" value="P:response to hypochlorite"/>
    <property type="evidence" value="ECO:0000315"/>
    <property type="project" value="PseudoCAP"/>
</dbReference>
<dbReference type="FunFam" id="2.170.150.20:FF:000001">
    <property type="entry name" value="Peptide methionine sulfoxide reductase MsrB"/>
    <property type="match status" value="1"/>
</dbReference>
<dbReference type="Gene3D" id="2.170.150.20">
    <property type="entry name" value="Peptide methionine sulfoxide reductase"/>
    <property type="match status" value="1"/>
</dbReference>
<dbReference type="HAMAP" id="MF_01400">
    <property type="entry name" value="MsrB"/>
    <property type="match status" value="1"/>
</dbReference>
<dbReference type="InterPro" id="IPR028427">
    <property type="entry name" value="Met_Sox_Rdtase_MsrB"/>
</dbReference>
<dbReference type="InterPro" id="IPR002579">
    <property type="entry name" value="Met_Sox_Rdtase_MsrB_dom"/>
</dbReference>
<dbReference type="InterPro" id="IPR011057">
    <property type="entry name" value="Mss4-like_sf"/>
</dbReference>
<dbReference type="NCBIfam" id="TIGR00357">
    <property type="entry name" value="peptide-methionine (R)-S-oxide reductase MsrB"/>
    <property type="match status" value="1"/>
</dbReference>
<dbReference type="PANTHER" id="PTHR10173">
    <property type="entry name" value="METHIONINE SULFOXIDE REDUCTASE"/>
    <property type="match status" value="1"/>
</dbReference>
<dbReference type="PANTHER" id="PTHR10173:SF52">
    <property type="entry name" value="METHIONINE-R-SULFOXIDE REDUCTASE B1"/>
    <property type="match status" value="1"/>
</dbReference>
<dbReference type="Pfam" id="PF01641">
    <property type="entry name" value="SelR"/>
    <property type="match status" value="1"/>
</dbReference>
<dbReference type="SUPFAM" id="SSF51316">
    <property type="entry name" value="Mss4-like"/>
    <property type="match status" value="1"/>
</dbReference>
<dbReference type="PROSITE" id="PS51790">
    <property type="entry name" value="MSRB"/>
    <property type="match status" value="1"/>
</dbReference>
<proteinExistence type="inferred from homology"/>
<feature type="chain" id="PRO_0000140286" description="Peptide methionine sulfoxide reductase MsrB">
    <location>
        <begin position="1"/>
        <end position="132"/>
    </location>
</feature>
<feature type="domain" description="MsrB" evidence="2">
    <location>
        <begin position="8"/>
        <end position="130"/>
    </location>
</feature>
<feature type="active site" description="Nucleophile" evidence="2">
    <location>
        <position position="119"/>
    </location>
</feature>
<feature type="binding site" evidence="2">
    <location>
        <position position="47"/>
    </location>
    <ligand>
        <name>Zn(2+)</name>
        <dbReference type="ChEBI" id="CHEBI:29105"/>
    </ligand>
</feature>
<feature type="binding site" evidence="2">
    <location>
        <position position="50"/>
    </location>
    <ligand>
        <name>Zn(2+)</name>
        <dbReference type="ChEBI" id="CHEBI:29105"/>
    </ligand>
</feature>
<feature type="binding site" evidence="2">
    <location>
        <position position="96"/>
    </location>
    <ligand>
        <name>Zn(2+)</name>
        <dbReference type="ChEBI" id="CHEBI:29105"/>
    </ligand>
</feature>
<feature type="binding site" evidence="2">
    <location>
        <position position="99"/>
    </location>
    <ligand>
        <name>Zn(2+)</name>
        <dbReference type="ChEBI" id="CHEBI:29105"/>
    </ligand>
</feature>
<evidence type="ECO:0000255" key="1">
    <source>
        <dbReference type="HAMAP-Rule" id="MF_01400"/>
    </source>
</evidence>
<evidence type="ECO:0000255" key="2">
    <source>
        <dbReference type="PROSITE-ProRule" id="PRU01126"/>
    </source>
</evidence>
<gene>
    <name evidence="1" type="primary">msrB</name>
    <name type="ordered locus">PA2827</name>
</gene>
<protein>
    <recommendedName>
        <fullName evidence="1">Peptide methionine sulfoxide reductase MsrB</fullName>
        <ecNumber evidence="1">1.8.4.12</ecNumber>
    </recommendedName>
    <alternativeName>
        <fullName evidence="1">Peptide-methionine (R)-S-oxide reductase</fullName>
    </alternativeName>
</protein>